<proteinExistence type="inferred from homology"/>
<sequence length="150" mass="15875">MEKKVEFLWLEGRETETLSLPAYETEGAAGMDVAACLDADCTIEPGDIVLIPTGFALAIPTGYEIQVRPRSGLAIKHGLTVVNAPGTIDADYRGEVGVGLINLGRQAVTIHHGDRIAQLVLAPVLQARWTVVTELEATERGAGGFGHTGV</sequence>
<keyword id="KW-0378">Hydrolase</keyword>
<keyword id="KW-0460">Magnesium</keyword>
<keyword id="KW-0479">Metal-binding</keyword>
<keyword id="KW-0546">Nucleotide metabolism</keyword>
<keyword id="KW-1185">Reference proteome</keyword>
<accession>Q6AJZ0</accession>
<reference key="1">
    <citation type="journal article" date="2004" name="Environ. Microbiol.">
        <title>The genome of Desulfotalea psychrophila, a sulfate-reducing bacterium from permanently cold Arctic sediments.</title>
        <authorList>
            <person name="Rabus R."/>
            <person name="Ruepp A."/>
            <person name="Frickey T."/>
            <person name="Rattei T."/>
            <person name="Fartmann B."/>
            <person name="Stark M."/>
            <person name="Bauer M."/>
            <person name="Zibat A."/>
            <person name="Lombardot T."/>
            <person name="Becker I."/>
            <person name="Amann J."/>
            <person name="Gellner K."/>
            <person name="Teeling H."/>
            <person name="Leuschner W.D."/>
            <person name="Gloeckner F.-O."/>
            <person name="Lupas A.N."/>
            <person name="Amann R."/>
            <person name="Klenk H.-P."/>
        </authorList>
    </citation>
    <scope>NUCLEOTIDE SEQUENCE [LARGE SCALE GENOMIC DNA]</scope>
    <source>
        <strain>DSM 12343 / LSv54</strain>
    </source>
</reference>
<feature type="chain" id="PRO_0000182857" description="Deoxyuridine 5'-triphosphate nucleotidohydrolase">
    <location>
        <begin position="1"/>
        <end position="150"/>
    </location>
</feature>
<feature type="binding site" evidence="1">
    <location>
        <begin position="70"/>
        <end position="72"/>
    </location>
    <ligand>
        <name>substrate</name>
    </ligand>
</feature>
<feature type="binding site" evidence="1">
    <location>
        <position position="83"/>
    </location>
    <ligand>
        <name>substrate</name>
    </ligand>
</feature>
<feature type="binding site" evidence="1">
    <location>
        <begin position="87"/>
        <end position="89"/>
    </location>
    <ligand>
        <name>substrate</name>
    </ligand>
</feature>
<protein>
    <recommendedName>
        <fullName evidence="1">Deoxyuridine 5'-triphosphate nucleotidohydrolase</fullName>
        <shortName evidence="1">dUTPase</shortName>
        <ecNumber evidence="1">3.6.1.23</ecNumber>
    </recommendedName>
    <alternativeName>
        <fullName evidence="1">dUTP pyrophosphatase</fullName>
    </alternativeName>
</protein>
<comment type="function">
    <text evidence="1">This enzyme is involved in nucleotide metabolism: it produces dUMP, the immediate precursor of thymidine nucleotides and it decreases the intracellular concentration of dUTP so that uracil cannot be incorporated into DNA.</text>
</comment>
<comment type="catalytic activity">
    <reaction evidence="1">
        <text>dUTP + H2O = dUMP + diphosphate + H(+)</text>
        <dbReference type="Rhea" id="RHEA:10248"/>
        <dbReference type="ChEBI" id="CHEBI:15377"/>
        <dbReference type="ChEBI" id="CHEBI:15378"/>
        <dbReference type="ChEBI" id="CHEBI:33019"/>
        <dbReference type="ChEBI" id="CHEBI:61555"/>
        <dbReference type="ChEBI" id="CHEBI:246422"/>
        <dbReference type="EC" id="3.6.1.23"/>
    </reaction>
</comment>
<comment type="cofactor">
    <cofactor evidence="1">
        <name>Mg(2+)</name>
        <dbReference type="ChEBI" id="CHEBI:18420"/>
    </cofactor>
</comment>
<comment type="pathway">
    <text evidence="1">Pyrimidine metabolism; dUMP biosynthesis; dUMP from dCTP (dUTP route): step 2/2.</text>
</comment>
<comment type="similarity">
    <text evidence="1">Belongs to the dUTPase family.</text>
</comment>
<evidence type="ECO:0000255" key="1">
    <source>
        <dbReference type="HAMAP-Rule" id="MF_00116"/>
    </source>
</evidence>
<organism>
    <name type="scientific">Desulfotalea psychrophila (strain LSv54 / DSM 12343)</name>
    <dbReference type="NCBI Taxonomy" id="177439"/>
    <lineage>
        <taxon>Bacteria</taxon>
        <taxon>Pseudomonadati</taxon>
        <taxon>Thermodesulfobacteriota</taxon>
        <taxon>Desulfobulbia</taxon>
        <taxon>Desulfobulbales</taxon>
        <taxon>Desulfocapsaceae</taxon>
        <taxon>Desulfotalea</taxon>
    </lineage>
</organism>
<dbReference type="EC" id="3.6.1.23" evidence="1"/>
<dbReference type="EMBL" id="CR522870">
    <property type="protein sequence ID" value="CAG37336.1"/>
    <property type="molecule type" value="Genomic_DNA"/>
</dbReference>
<dbReference type="RefSeq" id="WP_011189848.1">
    <property type="nucleotide sequence ID" value="NC_006138.1"/>
</dbReference>
<dbReference type="SMR" id="Q6AJZ0"/>
<dbReference type="STRING" id="177439.DP2607"/>
<dbReference type="KEGG" id="dps:DP2607"/>
<dbReference type="eggNOG" id="COG0756">
    <property type="taxonomic scope" value="Bacteria"/>
</dbReference>
<dbReference type="HOGENOM" id="CLU_068508_1_0_7"/>
<dbReference type="OrthoDB" id="9809956at2"/>
<dbReference type="UniPathway" id="UPA00610">
    <property type="reaction ID" value="UER00666"/>
</dbReference>
<dbReference type="Proteomes" id="UP000000602">
    <property type="component" value="Chromosome"/>
</dbReference>
<dbReference type="GO" id="GO:0004170">
    <property type="term" value="F:dUTP diphosphatase activity"/>
    <property type="evidence" value="ECO:0007669"/>
    <property type="project" value="UniProtKB-UniRule"/>
</dbReference>
<dbReference type="GO" id="GO:0000287">
    <property type="term" value="F:magnesium ion binding"/>
    <property type="evidence" value="ECO:0007669"/>
    <property type="project" value="UniProtKB-UniRule"/>
</dbReference>
<dbReference type="GO" id="GO:0006226">
    <property type="term" value="P:dUMP biosynthetic process"/>
    <property type="evidence" value="ECO:0007669"/>
    <property type="project" value="UniProtKB-UniRule"/>
</dbReference>
<dbReference type="GO" id="GO:0046081">
    <property type="term" value="P:dUTP catabolic process"/>
    <property type="evidence" value="ECO:0007669"/>
    <property type="project" value="InterPro"/>
</dbReference>
<dbReference type="CDD" id="cd07557">
    <property type="entry name" value="trimeric_dUTPase"/>
    <property type="match status" value="1"/>
</dbReference>
<dbReference type="FunFam" id="2.70.40.10:FF:000002">
    <property type="entry name" value="dUTP diphosphatase"/>
    <property type="match status" value="1"/>
</dbReference>
<dbReference type="Gene3D" id="2.70.40.10">
    <property type="match status" value="1"/>
</dbReference>
<dbReference type="HAMAP" id="MF_00116">
    <property type="entry name" value="dUTPase_bact"/>
    <property type="match status" value="1"/>
</dbReference>
<dbReference type="InterPro" id="IPR008181">
    <property type="entry name" value="dUTPase"/>
</dbReference>
<dbReference type="InterPro" id="IPR029054">
    <property type="entry name" value="dUTPase-like"/>
</dbReference>
<dbReference type="InterPro" id="IPR036157">
    <property type="entry name" value="dUTPase-like_sf"/>
</dbReference>
<dbReference type="InterPro" id="IPR033704">
    <property type="entry name" value="dUTPase_trimeric"/>
</dbReference>
<dbReference type="NCBIfam" id="TIGR00576">
    <property type="entry name" value="dut"/>
    <property type="match status" value="1"/>
</dbReference>
<dbReference type="NCBIfam" id="NF001862">
    <property type="entry name" value="PRK00601.1"/>
    <property type="match status" value="1"/>
</dbReference>
<dbReference type="PANTHER" id="PTHR11241">
    <property type="entry name" value="DEOXYURIDINE 5'-TRIPHOSPHATE NUCLEOTIDOHYDROLASE"/>
    <property type="match status" value="1"/>
</dbReference>
<dbReference type="PANTHER" id="PTHR11241:SF0">
    <property type="entry name" value="DEOXYURIDINE 5'-TRIPHOSPHATE NUCLEOTIDOHYDROLASE"/>
    <property type="match status" value="1"/>
</dbReference>
<dbReference type="Pfam" id="PF00692">
    <property type="entry name" value="dUTPase"/>
    <property type="match status" value="1"/>
</dbReference>
<dbReference type="SUPFAM" id="SSF51283">
    <property type="entry name" value="dUTPase-like"/>
    <property type="match status" value="1"/>
</dbReference>
<name>DUT_DESPS</name>
<gene>
    <name evidence="1" type="primary">dut</name>
    <name type="ordered locus">DP2607</name>
</gene>